<feature type="chain" id="PRO_0000244348" description="Arrestin domain-containing protein 2">
    <location>
        <begin position="1"/>
        <end position="407"/>
    </location>
</feature>
<feature type="sequence conflict" description="In Ref. 1; BAE23261." evidence="2" ref="1">
    <original>F</original>
    <variation>L</variation>
    <location>
        <position position="227"/>
    </location>
</feature>
<feature type="sequence conflict" description="In Ref. 1; BAE22637." evidence="2" ref="1">
    <original>L</original>
    <variation>Q</variation>
    <location>
        <position position="261"/>
    </location>
</feature>
<sequence length="407" mass="44259">MLFDKVKAFVVEIDGARTGTEPVFHGGQAVAGRVLLELAGAARVGALRLRARGRARAHWTESRSAGSSTAYTQSYSERVEVVNHRATLLAPDSGDIATLPAGRHEFPFSFQLPISLVTSFEGKHGSVRYSIKATLHRPWVPARCARKVFTVIEPVDINTPALLEPQAGAREKVARSWYCTRGLVSLSAKIDRKGYTPGEVIPIFAEIDNGSTRAVQPRAALVQTQTFMARGARKQKRAVVASVDGEPVGPNRRALWPGRALRIPPVGPSILQCRVLSVDYSLKVFVDIPGSSKLLLELPLVIGTVPLHPLGSRSASVGSRASFLQDWGLCTMMDRPEAPPEYSEVVRESQLVCASPGPSSLLHDLGVTTEGPYFACLQEFRYCPPPLYSEEDPNPPSEAVRPRCMTC</sequence>
<accession>Q9D668</accession>
<accession>Q3UVK8</accession>
<accession>Q3UXC6</accession>
<evidence type="ECO:0000250" key="1">
    <source>
        <dbReference type="UniProtKB" id="Q8TBH0"/>
    </source>
</evidence>
<evidence type="ECO:0000305" key="2"/>
<comment type="subunit">
    <text evidence="1">Interacts with WWP1 (via WW domains).</text>
</comment>
<comment type="similarity">
    <text evidence="2">Belongs to the arrestin family.</text>
</comment>
<reference key="1">
    <citation type="journal article" date="2005" name="Science">
        <title>The transcriptional landscape of the mammalian genome.</title>
        <authorList>
            <person name="Carninci P."/>
            <person name="Kasukawa T."/>
            <person name="Katayama S."/>
            <person name="Gough J."/>
            <person name="Frith M.C."/>
            <person name="Maeda N."/>
            <person name="Oyama R."/>
            <person name="Ravasi T."/>
            <person name="Lenhard B."/>
            <person name="Wells C."/>
            <person name="Kodzius R."/>
            <person name="Shimokawa K."/>
            <person name="Bajic V.B."/>
            <person name="Brenner S.E."/>
            <person name="Batalov S."/>
            <person name="Forrest A.R."/>
            <person name="Zavolan M."/>
            <person name="Davis M.J."/>
            <person name="Wilming L.G."/>
            <person name="Aidinis V."/>
            <person name="Allen J.E."/>
            <person name="Ambesi-Impiombato A."/>
            <person name="Apweiler R."/>
            <person name="Aturaliya R.N."/>
            <person name="Bailey T.L."/>
            <person name="Bansal M."/>
            <person name="Baxter L."/>
            <person name="Beisel K.W."/>
            <person name="Bersano T."/>
            <person name="Bono H."/>
            <person name="Chalk A.M."/>
            <person name="Chiu K.P."/>
            <person name="Choudhary V."/>
            <person name="Christoffels A."/>
            <person name="Clutterbuck D.R."/>
            <person name="Crowe M.L."/>
            <person name="Dalla E."/>
            <person name="Dalrymple B.P."/>
            <person name="de Bono B."/>
            <person name="Della Gatta G."/>
            <person name="di Bernardo D."/>
            <person name="Down T."/>
            <person name="Engstrom P."/>
            <person name="Fagiolini M."/>
            <person name="Faulkner G."/>
            <person name="Fletcher C.F."/>
            <person name="Fukushima T."/>
            <person name="Furuno M."/>
            <person name="Futaki S."/>
            <person name="Gariboldi M."/>
            <person name="Georgii-Hemming P."/>
            <person name="Gingeras T.R."/>
            <person name="Gojobori T."/>
            <person name="Green R.E."/>
            <person name="Gustincich S."/>
            <person name="Harbers M."/>
            <person name="Hayashi Y."/>
            <person name="Hensch T.K."/>
            <person name="Hirokawa N."/>
            <person name="Hill D."/>
            <person name="Huminiecki L."/>
            <person name="Iacono M."/>
            <person name="Ikeo K."/>
            <person name="Iwama A."/>
            <person name="Ishikawa T."/>
            <person name="Jakt M."/>
            <person name="Kanapin A."/>
            <person name="Katoh M."/>
            <person name="Kawasawa Y."/>
            <person name="Kelso J."/>
            <person name="Kitamura H."/>
            <person name="Kitano H."/>
            <person name="Kollias G."/>
            <person name="Krishnan S.P."/>
            <person name="Kruger A."/>
            <person name="Kummerfeld S.K."/>
            <person name="Kurochkin I.V."/>
            <person name="Lareau L.F."/>
            <person name="Lazarevic D."/>
            <person name="Lipovich L."/>
            <person name="Liu J."/>
            <person name="Liuni S."/>
            <person name="McWilliam S."/>
            <person name="Madan Babu M."/>
            <person name="Madera M."/>
            <person name="Marchionni L."/>
            <person name="Matsuda H."/>
            <person name="Matsuzawa S."/>
            <person name="Miki H."/>
            <person name="Mignone F."/>
            <person name="Miyake S."/>
            <person name="Morris K."/>
            <person name="Mottagui-Tabar S."/>
            <person name="Mulder N."/>
            <person name="Nakano N."/>
            <person name="Nakauchi H."/>
            <person name="Ng P."/>
            <person name="Nilsson R."/>
            <person name="Nishiguchi S."/>
            <person name="Nishikawa S."/>
            <person name="Nori F."/>
            <person name="Ohara O."/>
            <person name="Okazaki Y."/>
            <person name="Orlando V."/>
            <person name="Pang K.C."/>
            <person name="Pavan W.J."/>
            <person name="Pavesi G."/>
            <person name="Pesole G."/>
            <person name="Petrovsky N."/>
            <person name="Piazza S."/>
            <person name="Reed J."/>
            <person name="Reid J.F."/>
            <person name="Ring B.Z."/>
            <person name="Ringwald M."/>
            <person name="Rost B."/>
            <person name="Ruan Y."/>
            <person name="Salzberg S.L."/>
            <person name="Sandelin A."/>
            <person name="Schneider C."/>
            <person name="Schoenbach C."/>
            <person name="Sekiguchi K."/>
            <person name="Semple C.A."/>
            <person name="Seno S."/>
            <person name="Sessa L."/>
            <person name="Sheng Y."/>
            <person name="Shibata Y."/>
            <person name="Shimada H."/>
            <person name="Shimada K."/>
            <person name="Silva D."/>
            <person name="Sinclair B."/>
            <person name="Sperling S."/>
            <person name="Stupka E."/>
            <person name="Sugiura K."/>
            <person name="Sultana R."/>
            <person name="Takenaka Y."/>
            <person name="Taki K."/>
            <person name="Tammoja K."/>
            <person name="Tan S.L."/>
            <person name="Tang S."/>
            <person name="Taylor M.S."/>
            <person name="Tegner J."/>
            <person name="Teichmann S.A."/>
            <person name="Ueda H.R."/>
            <person name="van Nimwegen E."/>
            <person name="Verardo R."/>
            <person name="Wei C.L."/>
            <person name="Yagi K."/>
            <person name="Yamanishi H."/>
            <person name="Zabarovsky E."/>
            <person name="Zhu S."/>
            <person name="Zimmer A."/>
            <person name="Hide W."/>
            <person name="Bult C."/>
            <person name="Grimmond S.M."/>
            <person name="Teasdale R.D."/>
            <person name="Liu E.T."/>
            <person name="Brusic V."/>
            <person name="Quackenbush J."/>
            <person name="Wahlestedt C."/>
            <person name="Mattick J.S."/>
            <person name="Hume D.A."/>
            <person name="Kai C."/>
            <person name="Sasaki D."/>
            <person name="Tomaru Y."/>
            <person name="Fukuda S."/>
            <person name="Kanamori-Katayama M."/>
            <person name="Suzuki M."/>
            <person name="Aoki J."/>
            <person name="Arakawa T."/>
            <person name="Iida J."/>
            <person name="Imamura K."/>
            <person name="Itoh M."/>
            <person name="Kato T."/>
            <person name="Kawaji H."/>
            <person name="Kawagashira N."/>
            <person name="Kawashima T."/>
            <person name="Kojima M."/>
            <person name="Kondo S."/>
            <person name="Konno H."/>
            <person name="Nakano K."/>
            <person name="Ninomiya N."/>
            <person name="Nishio T."/>
            <person name="Okada M."/>
            <person name="Plessy C."/>
            <person name="Shibata K."/>
            <person name="Shiraki T."/>
            <person name="Suzuki S."/>
            <person name="Tagami M."/>
            <person name="Waki K."/>
            <person name="Watahiki A."/>
            <person name="Okamura-Oho Y."/>
            <person name="Suzuki H."/>
            <person name="Kawai J."/>
            <person name="Hayashizaki Y."/>
        </authorList>
    </citation>
    <scope>NUCLEOTIDE SEQUENCE [LARGE SCALE MRNA]</scope>
    <source>
        <strain>C57BL/6J</strain>
        <tissue>Egg</tissue>
        <tissue>Skin</tissue>
    </source>
</reference>
<reference key="2">
    <citation type="journal article" date="2004" name="Genome Res.">
        <title>The status, quality, and expansion of the NIH full-length cDNA project: the Mammalian Gene Collection (MGC).</title>
        <authorList>
            <consortium name="The MGC Project Team"/>
        </authorList>
    </citation>
    <scope>NUCLEOTIDE SEQUENCE [LARGE SCALE MRNA]</scope>
    <source>
        <strain>C57BL/6J</strain>
        <tissue>Mammary gland</tissue>
    </source>
</reference>
<organism>
    <name type="scientific">Mus musculus</name>
    <name type="common">Mouse</name>
    <dbReference type="NCBI Taxonomy" id="10090"/>
    <lineage>
        <taxon>Eukaryota</taxon>
        <taxon>Metazoa</taxon>
        <taxon>Chordata</taxon>
        <taxon>Craniata</taxon>
        <taxon>Vertebrata</taxon>
        <taxon>Euteleostomi</taxon>
        <taxon>Mammalia</taxon>
        <taxon>Eutheria</taxon>
        <taxon>Euarchontoglires</taxon>
        <taxon>Glires</taxon>
        <taxon>Rodentia</taxon>
        <taxon>Myomorpha</taxon>
        <taxon>Muroidea</taxon>
        <taxon>Muridae</taxon>
        <taxon>Murinae</taxon>
        <taxon>Mus</taxon>
        <taxon>Mus</taxon>
    </lineage>
</organism>
<name>ARRD2_MOUSE</name>
<gene>
    <name type="primary">Arrdc2</name>
</gene>
<keyword id="KW-1185">Reference proteome</keyword>
<proteinExistence type="evidence at transcript level"/>
<dbReference type="EMBL" id="AK014582">
    <property type="protein sequence ID" value="BAB29443.1"/>
    <property type="molecule type" value="mRNA"/>
</dbReference>
<dbReference type="EMBL" id="AK135740">
    <property type="protein sequence ID" value="BAE22637.1"/>
    <property type="molecule type" value="mRNA"/>
</dbReference>
<dbReference type="EMBL" id="AK137175">
    <property type="protein sequence ID" value="BAE23261.1"/>
    <property type="molecule type" value="mRNA"/>
</dbReference>
<dbReference type="EMBL" id="BC036384">
    <property type="protein sequence ID" value="AAH36384.1"/>
    <property type="molecule type" value="mRNA"/>
</dbReference>
<dbReference type="CCDS" id="CCDS40376.1"/>
<dbReference type="RefSeq" id="NP_081836.1">
    <property type="nucleotide sequence ID" value="NM_027560.1"/>
</dbReference>
<dbReference type="SMR" id="Q9D668"/>
<dbReference type="FunCoup" id="Q9D668">
    <property type="interactions" value="302"/>
</dbReference>
<dbReference type="STRING" id="10090.ENSMUSP00000002989"/>
<dbReference type="PhosphoSitePlus" id="Q9D668"/>
<dbReference type="PaxDb" id="10090-ENSMUSP00000002989"/>
<dbReference type="ProteomicsDB" id="283175"/>
<dbReference type="Antibodypedia" id="58020">
    <property type="antibodies" value="95 antibodies from 22 providers"/>
</dbReference>
<dbReference type="DNASU" id="70807"/>
<dbReference type="Ensembl" id="ENSMUST00000002989.11">
    <property type="protein sequence ID" value="ENSMUSP00000002989.10"/>
    <property type="gene ID" value="ENSMUSG00000002910.12"/>
</dbReference>
<dbReference type="GeneID" id="70807"/>
<dbReference type="KEGG" id="mmu:70807"/>
<dbReference type="UCSC" id="uc009mbt.1">
    <property type="organism name" value="mouse"/>
</dbReference>
<dbReference type="AGR" id="MGI:1918057"/>
<dbReference type="CTD" id="27106"/>
<dbReference type="MGI" id="MGI:1918057">
    <property type="gene designation" value="Arrdc2"/>
</dbReference>
<dbReference type="VEuPathDB" id="HostDB:ENSMUSG00000002910"/>
<dbReference type="eggNOG" id="KOG3780">
    <property type="taxonomic scope" value="Eukaryota"/>
</dbReference>
<dbReference type="GeneTree" id="ENSGT00940000159994"/>
<dbReference type="HOGENOM" id="CLU_039221_1_1_1"/>
<dbReference type="InParanoid" id="Q9D668"/>
<dbReference type="OMA" id="QSYSERM"/>
<dbReference type="OrthoDB" id="2333384at2759"/>
<dbReference type="PhylomeDB" id="Q9D668"/>
<dbReference type="TreeFam" id="TF313650"/>
<dbReference type="BioGRID-ORCS" id="70807">
    <property type="hits" value="4 hits in 77 CRISPR screens"/>
</dbReference>
<dbReference type="ChiTaRS" id="Arrdc2">
    <property type="organism name" value="mouse"/>
</dbReference>
<dbReference type="PRO" id="PR:Q9D668"/>
<dbReference type="Proteomes" id="UP000000589">
    <property type="component" value="Chromosome 8"/>
</dbReference>
<dbReference type="RNAct" id="Q9D668">
    <property type="molecule type" value="protein"/>
</dbReference>
<dbReference type="Bgee" id="ENSMUSG00000002910">
    <property type="expression patterns" value="Expressed in hindlimb stylopod muscle and 63 other cell types or tissues"/>
</dbReference>
<dbReference type="ExpressionAtlas" id="Q9D668">
    <property type="expression patterns" value="baseline and differential"/>
</dbReference>
<dbReference type="GO" id="GO:0031410">
    <property type="term" value="C:cytoplasmic vesicle"/>
    <property type="evidence" value="ECO:0000266"/>
    <property type="project" value="MGI"/>
</dbReference>
<dbReference type="GO" id="GO:0005886">
    <property type="term" value="C:plasma membrane"/>
    <property type="evidence" value="ECO:0000266"/>
    <property type="project" value="MGI"/>
</dbReference>
<dbReference type="FunFam" id="2.60.40.640:FF:000014">
    <property type="entry name" value="arrestin domain-containing protein 2 isoform X1"/>
    <property type="match status" value="1"/>
</dbReference>
<dbReference type="FunFam" id="2.60.40.640:FF:000007">
    <property type="entry name" value="Arrestin domain-containing protein 3 mRNA"/>
    <property type="match status" value="1"/>
</dbReference>
<dbReference type="Gene3D" id="2.60.40.640">
    <property type="match status" value="2"/>
</dbReference>
<dbReference type="InterPro" id="IPR014752">
    <property type="entry name" value="Arrestin-like_C"/>
</dbReference>
<dbReference type="InterPro" id="IPR011021">
    <property type="entry name" value="Arrestin-like_N"/>
</dbReference>
<dbReference type="InterPro" id="IPR011022">
    <property type="entry name" value="Arrestin_C-like"/>
</dbReference>
<dbReference type="InterPro" id="IPR050357">
    <property type="entry name" value="Arrestin_domain-protein"/>
</dbReference>
<dbReference type="InterPro" id="IPR014756">
    <property type="entry name" value="Ig_E-set"/>
</dbReference>
<dbReference type="PANTHER" id="PTHR11188">
    <property type="entry name" value="ARRESTIN DOMAIN CONTAINING PROTEIN"/>
    <property type="match status" value="1"/>
</dbReference>
<dbReference type="PANTHER" id="PTHR11188:SF48">
    <property type="entry name" value="ARRESTIN DOMAIN-CONTAINING PROTEIN 2"/>
    <property type="match status" value="1"/>
</dbReference>
<dbReference type="Pfam" id="PF02752">
    <property type="entry name" value="Arrestin_C"/>
    <property type="match status" value="1"/>
</dbReference>
<dbReference type="Pfam" id="PF00339">
    <property type="entry name" value="Arrestin_N"/>
    <property type="match status" value="1"/>
</dbReference>
<dbReference type="SMART" id="SM01017">
    <property type="entry name" value="Arrestin_C"/>
    <property type="match status" value="1"/>
</dbReference>
<dbReference type="SUPFAM" id="SSF81296">
    <property type="entry name" value="E set domains"/>
    <property type="match status" value="2"/>
</dbReference>
<protein>
    <recommendedName>
        <fullName>Arrestin domain-containing protein 2</fullName>
    </recommendedName>
</protein>